<gene>
    <name evidence="12" type="primary">spy</name>
    <name type="ordered locus">b1743</name>
    <name type="ordered locus">JW1732</name>
</gene>
<reference key="1">
    <citation type="journal article" date="1997" name="J. Bacteriol.">
        <title>A new periplasmic protein of Escherichia coli which is synthesized in spheroplasts but not in intact cells.</title>
        <authorList>
            <person name="Hagenmaier S."/>
            <person name="Stierhof Y.-D."/>
            <person name="Henning U."/>
        </authorList>
    </citation>
    <scope>NUCLEOTIDE SEQUENCE [GENOMIC DNA]</scope>
    <scope>PROTEIN SEQUENCE OF 24-40</scope>
    <scope>SUBCELLULAR LOCATION</scope>
    <scope>DEVELOPMENTAL STAGE</scope>
    <scope>INDUCTION</scope>
    <scope>DISRUPTION PHENOTYPE</scope>
    <source>
        <strain>K12 / MC4100</strain>
    </source>
</reference>
<reference key="2">
    <citation type="journal article" date="1996" name="DNA Res.">
        <title>A 570-kb DNA sequence of the Escherichia coli K-12 genome corresponding to the 28.0-40.1 min region on the linkage map.</title>
        <authorList>
            <person name="Aiba H."/>
            <person name="Baba T."/>
            <person name="Fujita K."/>
            <person name="Hayashi K."/>
            <person name="Inada T."/>
            <person name="Isono K."/>
            <person name="Itoh T."/>
            <person name="Kasai H."/>
            <person name="Kashimoto K."/>
            <person name="Kimura S."/>
            <person name="Kitakawa M."/>
            <person name="Kitagawa M."/>
            <person name="Makino K."/>
            <person name="Miki T."/>
            <person name="Mizobuchi K."/>
            <person name="Mori H."/>
            <person name="Mori T."/>
            <person name="Motomura K."/>
            <person name="Nakade S."/>
            <person name="Nakamura Y."/>
            <person name="Nashimoto H."/>
            <person name="Nishio Y."/>
            <person name="Oshima T."/>
            <person name="Saito N."/>
            <person name="Sampei G."/>
            <person name="Seki Y."/>
            <person name="Sivasundaram S."/>
            <person name="Tagami H."/>
            <person name="Takeda J."/>
            <person name="Takemoto K."/>
            <person name="Takeuchi Y."/>
            <person name="Wada C."/>
            <person name="Yamamoto Y."/>
            <person name="Horiuchi T."/>
        </authorList>
    </citation>
    <scope>NUCLEOTIDE SEQUENCE [LARGE SCALE GENOMIC DNA]</scope>
    <source>
        <strain>K12 / W3110 / ATCC 27325 / DSM 5911</strain>
    </source>
</reference>
<reference key="3">
    <citation type="journal article" date="1997" name="Science">
        <title>The complete genome sequence of Escherichia coli K-12.</title>
        <authorList>
            <person name="Blattner F.R."/>
            <person name="Plunkett G. III"/>
            <person name="Bloch C.A."/>
            <person name="Perna N.T."/>
            <person name="Burland V."/>
            <person name="Riley M."/>
            <person name="Collado-Vides J."/>
            <person name="Glasner J.D."/>
            <person name="Rode C.K."/>
            <person name="Mayhew G.F."/>
            <person name="Gregor J."/>
            <person name="Davis N.W."/>
            <person name="Kirkpatrick H.A."/>
            <person name="Goeden M.A."/>
            <person name="Rose D.J."/>
            <person name="Mau B."/>
            <person name="Shao Y."/>
        </authorList>
    </citation>
    <scope>NUCLEOTIDE SEQUENCE [LARGE SCALE GENOMIC DNA]</scope>
    <source>
        <strain>K12 / MG1655 / ATCC 47076</strain>
    </source>
</reference>
<reference key="4">
    <citation type="journal article" date="2006" name="Mol. Syst. Biol.">
        <title>Highly accurate genome sequences of Escherichia coli K-12 strains MG1655 and W3110.</title>
        <authorList>
            <person name="Hayashi K."/>
            <person name="Morooka N."/>
            <person name="Yamamoto Y."/>
            <person name="Fujita K."/>
            <person name="Isono K."/>
            <person name="Choi S."/>
            <person name="Ohtsubo E."/>
            <person name="Baba T."/>
            <person name="Wanner B.L."/>
            <person name="Mori H."/>
            <person name="Horiuchi T."/>
        </authorList>
    </citation>
    <scope>NUCLEOTIDE SEQUENCE [LARGE SCALE GENOMIC DNA]</scope>
    <source>
        <strain>K12 / W3110 / ATCC 27325 / DSM 5911</strain>
    </source>
</reference>
<reference key="5">
    <citation type="journal article" date="1998" name="J. Biol. Chem.">
        <title>Identification of a novel transcription regulator from Proteus mirabilis, PMTR, revealed a possible role of YJAI protein in balancing zinc in Escherichia coli.</title>
        <authorList>
            <person name="Noll M."/>
            <person name="Petrukhin K."/>
            <person name="Lutsenko S."/>
        </authorList>
    </citation>
    <scope>PROTEIN SEQUENCE OF 24-38</scope>
    <scope>SUBCELLULAR LOCATION</scope>
    <scope>INDUCTION BY ZINC</scope>
</reference>
<reference key="6">
    <citation type="journal article" date="2000" name="Mol. Microbiol.">
        <title>Tethering of CpxP to the inner membrane prevents spheroplast induction of the cpx envelope stress response.</title>
        <authorList>
            <person name="Raivio T.L."/>
            <person name="Laird M.W."/>
            <person name="Joly J.C."/>
            <person name="Silhavy T.J."/>
        </authorList>
    </citation>
    <scope>INDUCTION BY CPX ENVELOPE STRESS RESPONSE</scope>
    <scope>DISRUPTION PHENOTYPE</scope>
    <source>
        <strain>K12 / MC4100</strain>
    </source>
</reference>
<reference key="7">
    <citation type="journal article" date="2002" name="Mol. Microbiol.">
        <title>A third envelope stress signal transduction pathway in Escherichia coli.</title>
        <authorList>
            <person name="Raffa R.G."/>
            <person name="Raivio T.L."/>
        </authorList>
    </citation>
    <scope>INDUCTION BY BOTH BAE AND CXP ENVELOPE STRESS RESPONSES</scope>
    <source>
        <strain>K12 / MC4100</strain>
    </source>
</reference>
<reference key="8">
    <citation type="journal article" date="2011" name="Nat. Struct. Mol. Biol.">
        <title>Genetic selection designed to stabilize proteins uncovers a chaperone called Spy.</title>
        <authorList>
            <person name="Quan S."/>
            <person name="Koldewey P."/>
            <person name="Tapley T."/>
            <person name="Kirsch N."/>
            <person name="Ruane K.M."/>
            <person name="Pfizenmaier J."/>
            <person name="Shi R."/>
            <person name="Hofmann S."/>
            <person name="Foit L."/>
            <person name="Ren G."/>
            <person name="Jakob U."/>
            <person name="Xu Z."/>
            <person name="Cygler M."/>
            <person name="Bardwell J.C."/>
        </authorList>
    </citation>
    <scope>FUNCTION</scope>
    <scope>SUBSTRATE-BINDING</scope>
    <scope>SUBCELLULAR LOCATION</scope>
    <scope>INDUCTION</scope>
    <scope>DISRUPTION PHENOTYPE</scope>
    <source>
        <strain>K12 / MG1655 / ATCC 47076</strain>
    </source>
</reference>
<reference key="9">
    <citation type="journal article" date="2014" name="Elife">
        <title>Super Spy variants implicate flexibility in chaperone action.</title>
        <authorList>
            <person name="Quan S."/>
            <person name="Wang L."/>
            <person name="Petrotchenko E.V."/>
            <person name="Makepeace K.A."/>
            <person name="Horowitz S."/>
            <person name="Yang J."/>
            <person name="Zhang Y."/>
            <person name="Borchers C.H."/>
            <person name="Bardwell J.C."/>
        </authorList>
    </citation>
    <scope>FUNCTION</scope>
    <scope>SUBSTRATE-BINDING</scope>
    <scope>MUTAGENESIS OF GLN-48; LEU-55; GLN-72; HIS-119; GLN-123 AND PHE-138</scope>
    <source>
        <strain>K12 / MG1655 / ATCC 47076</strain>
    </source>
</reference>
<reference key="10">
    <citation type="journal article" date="2014" name="Gene">
        <title>Genetic regulation of spy gene expression in Escherichia coli in the presence of protein unfolding agent ethanol.</title>
        <authorList>
            <person name="Srivastava S.K."/>
            <person name="Lambadi P.R."/>
            <person name="Ghosh T."/>
            <person name="Pathania R."/>
            <person name="Navani N.K."/>
        </authorList>
    </citation>
    <scope>INDUCTION</scope>
    <source>
        <strain>K12 / BW25113</strain>
    </source>
</reference>
<reference key="11">
    <citation type="journal article" date="2016" name="Nat. Struct. Mol. Biol.">
        <title>Substrate protein folds while it is bound to the ATP-independent chaperone Spy.</title>
        <authorList>
            <person name="Stull F."/>
            <person name="Koldewey P."/>
            <person name="Humes J.R."/>
            <person name="Radford S.E."/>
            <person name="Bardwell J.C."/>
        </authorList>
    </citation>
    <scope>FUNCTION</scope>
    <scope>REACTION MECHANISM</scope>
</reference>
<proteinExistence type="evidence at protein level"/>
<feature type="signal peptide" evidence="9 10">
    <location>
        <begin position="1"/>
        <end position="23"/>
    </location>
</feature>
<feature type="chain" id="PRO_0000022405" description="Periplasmic chaperone Spy">
    <location>
        <begin position="24"/>
        <end position="161"/>
    </location>
</feature>
<feature type="region of interest" description="Disordered" evidence="2">
    <location>
        <begin position="140"/>
        <end position="161"/>
    </location>
</feature>
<feature type="compositionally biased region" description="Basic and acidic residues" evidence="2">
    <location>
        <begin position="142"/>
        <end position="151"/>
    </location>
</feature>
<feature type="mutagenesis site" description="Increased chaperone activity, substrate affinity and chaperone flexibility." evidence="6">
    <original>Q</original>
    <variation>R</variation>
    <location>
        <position position="48"/>
    </location>
</feature>
<feature type="mutagenesis site" description="Increased chaperone activity, substrate affinity and chaperone flexibility." evidence="6">
    <original>L</original>
    <variation>P</variation>
    <location>
        <position position="55"/>
    </location>
</feature>
<feature type="mutagenesis site" description="Increased chaperone activity, substrate affinity and chaperone flexibility, despite decreased Spy stability." evidence="6">
    <original>Q</original>
    <variation>L</variation>
    <location>
        <position position="72"/>
    </location>
</feature>
<feature type="mutagenesis site" description="Increased chaperone activity, substrate affinity and chaperone flexibility." evidence="6">
    <original>H</original>
    <variation>L</variation>
    <location>
        <position position="119"/>
    </location>
</feature>
<feature type="mutagenesis site" description="Increased chaperone activity, substrate affinity and chaperone flexibility." evidence="6">
    <original>Q</original>
    <variation>L</variation>
    <location>
        <position position="123"/>
    </location>
</feature>
<feature type="mutagenesis site" description="Increased chaperone activity, substrate affinity and chaperone flexibility." evidence="6">
    <original>F</original>
    <variation>I</variation>
    <variation>L</variation>
    <location>
        <position position="138"/>
    </location>
</feature>
<feature type="sequence conflict" description="In Ref. 1; AA sequence." evidence="13" ref="1">
    <original>M</original>
    <variation>MM</variation>
    <location>
        <position position="38"/>
    </location>
</feature>
<feature type="helix" evidence="15">
    <location>
        <begin position="53"/>
        <end position="55"/>
    </location>
</feature>
<feature type="helix" evidence="15">
    <location>
        <begin position="59"/>
        <end position="69"/>
    </location>
</feature>
<feature type="helix" evidence="15">
    <location>
        <begin position="81"/>
        <end position="91"/>
    </location>
</feature>
<feature type="strand" evidence="15">
    <location>
        <begin position="92"/>
        <end position="95"/>
    </location>
</feature>
<feature type="helix" evidence="15">
    <location>
        <begin position="98"/>
        <end position="106"/>
    </location>
</feature>
<feature type="helix" evidence="15">
    <location>
        <begin position="109"/>
        <end position="127"/>
    </location>
</feature>
<feature type="helix" evidence="15">
    <location>
        <begin position="132"/>
        <end position="143"/>
    </location>
</feature>
<comment type="function">
    <text evidence="5 6 8">An ATP-independent periplasmic chaperone, decreases protein aggregation and helps protein refolding. Binds substrate over a large region of its convex inner surface (PubMed:21317898, PubMed:24497545). Substrate protein folds while it is bound to chaperone (PubMed:26619265). Increasing Spy flexibility increases its substrate affinity and overall chaperone activity (shown for 3 different substrates) (PubMed:24497545). Protects proteins in vitro against tannin inactivation; tannins have antimicrobial activity (PubMed:21317898). Overexpression enhances the stability of otherwise unstable periplasmic proteins (PubMed:21317898).</text>
</comment>
<comment type="subunit">
    <text evidence="1">Homodimer.</text>
</comment>
<comment type="interaction">
    <interactant intactId="EBI-1121716">
        <id>P77754</id>
    </interactant>
    <interactant intactId="EBI-1035025">
        <id>Q03708</id>
        <label>imm</label>
    </interactant>
    <organismsDiffer>true</organismsDiffer>
    <experiments>2</experiments>
</comment>
<comment type="subcellular location">
    <subcellularLocation>
        <location evidence="5 9 10">Periplasm</location>
    </subcellularLocation>
</comment>
<comment type="developmental stage">
    <text evidence="9">Produced abundantly in spheroplasts, not detected in intact cells.</text>
</comment>
<comment type="induction">
    <text evidence="3 4 5 7 9 10">Induced by many sorts of periplasmic stress. Produced upon spheroplast formation, not induced by growth in 0.5 M sucrose or 0.35 M NaCl, nor by mutants that have a leaky periplasmic space (at protein level) (PubMed:9068658). Induction is partially dependent on the Cpx envelope stress response encoded by cpxA-cpxR; does not depend on sigma factor E (rpoE) (PubMed:10972835). Induction is also partially dependent on the Bae envelope stress response encoded by baeS-baeR; cpx and baeS effects are independent (PubMed:12354228). Overexpression of P pili protein PapG induces spy expression via both Cpx and Bae, overexpression of outer membrane protein NlpE induces spy via only Cpx whereas indole induces spy expression only via Bae (PubMed:12354228). Induced by 1 mM zinc (at protein level) (PubMed:9694902), via Bae, which also regulates ethanol induction of spy (PubMed:24999585). Induced by copper via Cpx (PubMed:24999585). Induced by tannic acid (to 25% of total periplasmic protein), butanol (to 20% total periplasmic protein) and ethanol (to 5% total periplasmic protein) (at protein level) (PubMed:21317898).</text>
</comment>
<comment type="domain">
    <text evidence="1 14">Has an elongated cradle shape.</text>
</comment>
<comment type="disruption phenotype">
    <text evidence="3 5 9">No observed growth phenotype (PubMed:9068658). Increased levels of degP and rpoH transcription; may induce the sigma factor E regulon (rpoE) (PubMed:10972835). Loss of about 50% of periplasmic alkaline phosphatase activity; very sensitive to tannic acid (PubMed:21317898).</text>
</comment>
<comment type="similarity">
    <text evidence="13">Belongs to the CpxP/Spy family.</text>
</comment>
<accession>P77754</accession>
<organism>
    <name type="scientific">Escherichia coli (strain K12)</name>
    <dbReference type="NCBI Taxonomy" id="83333"/>
    <lineage>
        <taxon>Bacteria</taxon>
        <taxon>Pseudomonadati</taxon>
        <taxon>Pseudomonadota</taxon>
        <taxon>Gammaproteobacteria</taxon>
        <taxon>Enterobacterales</taxon>
        <taxon>Enterobacteriaceae</taxon>
        <taxon>Escherichia</taxon>
    </lineage>
</organism>
<dbReference type="EMBL" id="Y07714">
    <property type="protein sequence ID" value="CAA68986.1"/>
    <property type="molecule type" value="Genomic_DNA"/>
</dbReference>
<dbReference type="EMBL" id="U00096">
    <property type="protein sequence ID" value="AAC74813.1"/>
    <property type="molecule type" value="Genomic_DNA"/>
</dbReference>
<dbReference type="EMBL" id="AP009048">
    <property type="protein sequence ID" value="BAA15531.1"/>
    <property type="molecule type" value="Genomic_DNA"/>
</dbReference>
<dbReference type="PIR" id="G64933">
    <property type="entry name" value="G64933"/>
</dbReference>
<dbReference type="RefSeq" id="NP_416257.1">
    <property type="nucleotide sequence ID" value="NC_000913.3"/>
</dbReference>
<dbReference type="RefSeq" id="WP_001228984.1">
    <property type="nucleotide sequence ID" value="NZ_SSZK01000001.1"/>
</dbReference>
<dbReference type="PDB" id="5WNW">
    <property type="method" value="X-ray"/>
    <property type="resolution" value="1.79 A"/>
    <property type="chains" value="A/B=52-147"/>
</dbReference>
<dbReference type="PDB" id="5WO1">
    <property type="method" value="X-ray"/>
    <property type="resolution" value="1.87 A"/>
    <property type="chains" value="A/B=52-147"/>
</dbReference>
<dbReference type="PDB" id="5WO2">
    <property type="method" value="X-ray"/>
    <property type="resolution" value="1.77 A"/>
    <property type="chains" value="A/B=52-147"/>
</dbReference>
<dbReference type="PDB" id="5WO3">
    <property type="method" value="X-ray"/>
    <property type="resolution" value="1.87 A"/>
    <property type="chains" value="A/B=52-147"/>
</dbReference>
<dbReference type="PDB" id="6BIE">
    <property type="method" value="X-ray"/>
    <property type="resolution" value="1.77 A"/>
    <property type="chains" value="A/B=52-147"/>
</dbReference>
<dbReference type="PDB" id="6OWX">
    <property type="method" value="X-ray"/>
    <property type="resolution" value="2.06 A"/>
    <property type="chains" value="A/B=52-147"/>
</dbReference>
<dbReference type="PDB" id="6OWY">
    <property type="method" value="X-ray"/>
    <property type="resolution" value="2.07 A"/>
    <property type="chains" value="A/B=52-147"/>
</dbReference>
<dbReference type="PDB" id="6OWZ">
    <property type="method" value="X-ray"/>
    <property type="resolution" value="2.05 A"/>
    <property type="chains" value="A/B=52-147"/>
</dbReference>
<dbReference type="PDBsum" id="5WNW"/>
<dbReference type="PDBsum" id="5WO1"/>
<dbReference type="PDBsum" id="5WO2"/>
<dbReference type="PDBsum" id="5WO3"/>
<dbReference type="PDBsum" id="6BIE"/>
<dbReference type="PDBsum" id="6OWX"/>
<dbReference type="PDBsum" id="6OWY"/>
<dbReference type="PDBsum" id="6OWZ"/>
<dbReference type="SMR" id="P77754"/>
<dbReference type="BioGRID" id="4262237">
    <property type="interactions" value="149"/>
</dbReference>
<dbReference type="DIP" id="DIP-10914N"/>
<dbReference type="FunCoup" id="P77754">
    <property type="interactions" value="64"/>
</dbReference>
<dbReference type="IntAct" id="P77754">
    <property type="interactions" value="4"/>
</dbReference>
<dbReference type="STRING" id="511145.b1743"/>
<dbReference type="jPOST" id="P77754"/>
<dbReference type="PaxDb" id="511145-b1743"/>
<dbReference type="EnsemblBacteria" id="AAC74813">
    <property type="protein sequence ID" value="AAC74813"/>
    <property type="gene ID" value="b1743"/>
</dbReference>
<dbReference type="GeneID" id="946253"/>
<dbReference type="KEGG" id="ecj:JW1732"/>
<dbReference type="KEGG" id="eco:b1743"/>
<dbReference type="KEGG" id="ecoc:C3026_09960"/>
<dbReference type="PATRIC" id="fig|1411691.4.peg.513"/>
<dbReference type="EchoBASE" id="EB3263"/>
<dbReference type="eggNOG" id="COG3678">
    <property type="taxonomic scope" value="Bacteria"/>
</dbReference>
<dbReference type="HOGENOM" id="CLU_124352_1_0_6"/>
<dbReference type="InParanoid" id="P77754"/>
<dbReference type="OMA" id="HDMMFKD"/>
<dbReference type="OrthoDB" id="6415382at2"/>
<dbReference type="PhylomeDB" id="P77754"/>
<dbReference type="BioCyc" id="EcoCyc:G6939-MONOMER"/>
<dbReference type="PRO" id="PR:P77754"/>
<dbReference type="Proteomes" id="UP000000625">
    <property type="component" value="Chromosome"/>
</dbReference>
<dbReference type="GO" id="GO:0030288">
    <property type="term" value="C:outer membrane-bounded periplasmic space"/>
    <property type="evidence" value="ECO:0000314"/>
    <property type="project" value="EcoCyc"/>
</dbReference>
<dbReference type="GO" id="GO:0044183">
    <property type="term" value="F:protein folding chaperone"/>
    <property type="evidence" value="ECO:0000314"/>
    <property type="project" value="UniProtKB"/>
</dbReference>
<dbReference type="GO" id="GO:0042803">
    <property type="term" value="F:protein homodimerization activity"/>
    <property type="evidence" value="ECO:0000314"/>
    <property type="project" value="EcoCyc"/>
</dbReference>
<dbReference type="GO" id="GO:0051082">
    <property type="term" value="F:unfolded protein binding"/>
    <property type="evidence" value="ECO:0000314"/>
    <property type="project" value="EcoCyc"/>
</dbReference>
<dbReference type="GO" id="GO:0061077">
    <property type="term" value="P:chaperone-mediated protein folding"/>
    <property type="evidence" value="ECO:0000314"/>
    <property type="project" value="EcoCyc"/>
</dbReference>
<dbReference type="CDD" id="cd09916">
    <property type="entry name" value="CpxP_like"/>
    <property type="match status" value="1"/>
</dbReference>
<dbReference type="FunFam" id="1.20.120.1490:FF:000002">
    <property type="entry name" value="ATP-independent periplasmic protein-refolding chaperone"/>
    <property type="match status" value="1"/>
</dbReference>
<dbReference type="Gene3D" id="1.20.120.1490">
    <property type="match status" value="1"/>
</dbReference>
<dbReference type="InterPro" id="IPR052211">
    <property type="entry name" value="Cpx_auxiliary_protein"/>
</dbReference>
<dbReference type="InterPro" id="IPR012899">
    <property type="entry name" value="LTXXQ"/>
</dbReference>
<dbReference type="NCBIfam" id="NF007769">
    <property type="entry name" value="PRK10455.1"/>
    <property type="match status" value="1"/>
</dbReference>
<dbReference type="PANTHER" id="PTHR38102">
    <property type="entry name" value="PERIPLASMIC CHAPERONE SPY"/>
    <property type="match status" value="1"/>
</dbReference>
<dbReference type="PANTHER" id="PTHR38102:SF1">
    <property type="entry name" value="PERIPLASMIC CHAPERONE SPY"/>
    <property type="match status" value="1"/>
</dbReference>
<dbReference type="Pfam" id="PF07813">
    <property type="entry name" value="LTXXQ"/>
    <property type="match status" value="1"/>
</dbReference>
<dbReference type="PIRSF" id="PIRSF034445">
    <property type="entry name" value="CpxP_Spy"/>
    <property type="match status" value="1"/>
</dbReference>
<name>SPY_ECOLI</name>
<evidence type="ECO:0000250" key="1">
    <source>
        <dbReference type="UniProtKB" id="Q8XDZ4"/>
    </source>
</evidence>
<evidence type="ECO:0000256" key="2">
    <source>
        <dbReference type="SAM" id="MobiDB-lite"/>
    </source>
</evidence>
<evidence type="ECO:0000269" key="3">
    <source>
    </source>
</evidence>
<evidence type="ECO:0000269" key="4">
    <source>
    </source>
</evidence>
<evidence type="ECO:0000269" key="5">
    <source>
    </source>
</evidence>
<evidence type="ECO:0000269" key="6">
    <source>
    </source>
</evidence>
<evidence type="ECO:0000269" key="7">
    <source>
    </source>
</evidence>
<evidence type="ECO:0000269" key="8">
    <source>
    </source>
</evidence>
<evidence type="ECO:0000269" key="9">
    <source>
    </source>
</evidence>
<evidence type="ECO:0000269" key="10">
    <source>
    </source>
</evidence>
<evidence type="ECO:0000303" key="11">
    <source>
    </source>
</evidence>
<evidence type="ECO:0000303" key="12">
    <source>
    </source>
</evidence>
<evidence type="ECO:0000305" key="13"/>
<evidence type="ECO:0000305" key="14">
    <source>
    </source>
</evidence>
<evidence type="ECO:0007829" key="15">
    <source>
        <dbReference type="PDB" id="5WO2"/>
    </source>
</evidence>
<sequence>MRKLTALFVASTLALGAANLAHAADTTTAAPADAKPMMHHKGKFGPHQDMMFKDLNLTDAQKQQIREIMKGQRDQMKRPPLEERRAMHDIIASDTFDKVKAEAQIAKMEEQRKANMLAHMETQNKIYNILTPEQKKQFNANFEKRLTERPAAKGKMPATAE</sequence>
<keyword id="KW-0002">3D-structure</keyword>
<keyword id="KW-0143">Chaperone</keyword>
<keyword id="KW-0903">Direct protein sequencing</keyword>
<keyword id="KW-0574">Periplasm</keyword>
<keyword id="KW-1185">Reference proteome</keyword>
<keyword id="KW-0732">Signal</keyword>
<keyword id="KW-0346">Stress response</keyword>
<protein>
    <recommendedName>
        <fullName evidence="11">Periplasmic chaperone Spy</fullName>
    </recommendedName>
    <alternativeName>
        <fullName evidence="12">Spheroplast protein Y</fullName>
    </alternativeName>
</protein>